<reference key="1">
    <citation type="journal article" date="1997" name="FEBS Lett.">
        <title>Induction of chymase that forms angiotensin II in the monkey atherosclerotic aorta.</title>
        <authorList>
            <person name="Takai S."/>
            <person name="Shiota N."/>
            <person name="Kobayashi S."/>
            <person name="Matsumura E."/>
            <person name="Miyazaki M."/>
        </authorList>
    </citation>
    <scope>NUCLEOTIDE SEQUENCE [MRNA]</scope>
</reference>
<organism>
    <name type="scientific">Macaca fascicularis</name>
    <name type="common">Crab-eating macaque</name>
    <name type="synonym">Cynomolgus monkey</name>
    <dbReference type="NCBI Taxonomy" id="9541"/>
    <lineage>
        <taxon>Eukaryota</taxon>
        <taxon>Metazoa</taxon>
        <taxon>Chordata</taxon>
        <taxon>Craniata</taxon>
        <taxon>Vertebrata</taxon>
        <taxon>Euteleostomi</taxon>
        <taxon>Mammalia</taxon>
        <taxon>Eutheria</taxon>
        <taxon>Euarchontoglires</taxon>
        <taxon>Primates</taxon>
        <taxon>Haplorrhini</taxon>
        <taxon>Catarrhini</taxon>
        <taxon>Cercopithecidae</taxon>
        <taxon>Cercopithecinae</taxon>
        <taxon>Macaca</taxon>
    </lineage>
</organism>
<name>CMA1_MACFA</name>
<proteinExistence type="evidence at transcript level"/>
<evidence type="ECO:0000250" key="1"/>
<evidence type="ECO:0000255" key="2"/>
<evidence type="ECO:0000255" key="3">
    <source>
        <dbReference type="PROSITE-ProRule" id="PRU00274"/>
    </source>
</evidence>
<feature type="signal peptide" evidence="1">
    <location>
        <begin position="1"/>
        <end position="19"/>
    </location>
</feature>
<feature type="propeptide" id="PRO_0000027435" description="Activation peptide">
    <location>
        <begin position="20"/>
        <end position="21"/>
    </location>
</feature>
<feature type="chain" id="PRO_0000027436" description="Chymase">
    <location>
        <begin position="22"/>
        <end position="247"/>
    </location>
</feature>
<feature type="domain" description="Peptidase S1" evidence="3">
    <location>
        <begin position="22"/>
        <end position="245"/>
    </location>
</feature>
<feature type="active site" description="Charge relay system" evidence="1">
    <location>
        <position position="66"/>
    </location>
</feature>
<feature type="active site" description="Charge relay system" evidence="1">
    <location>
        <position position="110"/>
    </location>
</feature>
<feature type="active site" description="Charge relay system" evidence="1">
    <location>
        <position position="203"/>
    </location>
</feature>
<feature type="glycosylation site" description="N-linked (GlcNAc...) asparagine" evidence="2">
    <location>
        <position position="80"/>
    </location>
</feature>
<feature type="glycosylation site" description="N-linked (GlcNAc...) asparagine" evidence="2">
    <location>
        <position position="103"/>
    </location>
</feature>
<feature type="disulfide bond" evidence="3">
    <location>
        <begin position="51"/>
        <end position="67"/>
    </location>
</feature>
<feature type="disulfide bond" evidence="3">
    <location>
        <begin position="144"/>
        <end position="209"/>
    </location>
</feature>
<feature type="disulfide bond" evidence="3">
    <location>
        <begin position="175"/>
        <end position="188"/>
    </location>
</feature>
<comment type="function">
    <text evidence="1">Major secreted protease of mast cells with suspected roles in vasoactive peptide generation, extracellular matrix degradation, and regulation of gland secretion.</text>
</comment>
<comment type="catalytic activity">
    <reaction>
        <text>Preferential cleavage: Phe-|-Xaa &gt; Tyr-|-Xaa &gt; Trp-|-Xaa &gt; Leu-|-Xaa.</text>
        <dbReference type="EC" id="3.4.21.39"/>
    </reaction>
</comment>
<comment type="subcellular location">
    <subcellularLocation>
        <location evidence="1">Secreted</location>
    </subcellularLocation>
    <subcellularLocation>
        <location evidence="1">Cytoplasmic granule</location>
    </subcellularLocation>
    <text evidence="1">Mast cell granules.</text>
</comment>
<comment type="similarity">
    <text evidence="3">Belongs to the peptidase S1 family. Granzyme subfamily.</text>
</comment>
<sequence>MLLLPLPLLLFFLCSRAEAGEIIGGTECKPHSRPYMAYLEIVTSNGPSKSCGGFLIRRNFVLTAVHCAGRSITVTLGAHNITEKEDTWQKLEVIKQFRHPKYNTSTLHHDIMLLKLKEKASLTLAVGTLPFPSQFNFVPPGRMCRVAGWGRTGVLKPGSDTLQEVKLRLMDPQACSHFRYFDHNLQLCVGNPRKTKSAFKGDSGGPLLCAGVAQGIVSYGRLDAKPPAVFTRISHYRPWINKILQAN</sequence>
<protein>
    <recommendedName>
        <fullName>Chymase</fullName>
        <ecNumber>3.4.21.39</ecNumber>
    </recommendedName>
    <alternativeName>
        <fullName>Alpha-chymase</fullName>
    </alternativeName>
</protein>
<keyword id="KW-1015">Disulfide bond</keyword>
<keyword id="KW-0325">Glycoprotein</keyword>
<keyword id="KW-0378">Hydrolase</keyword>
<keyword id="KW-0645">Protease</keyword>
<keyword id="KW-1185">Reference proteome</keyword>
<keyword id="KW-0964">Secreted</keyword>
<keyword id="KW-0720">Serine protease</keyword>
<keyword id="KW-0732">Signal</keyword>
<keyword id="KW-0865">Zymogen</keyword>
<dbReference type="EC" id="3.4.21.39"/>
<dbReference type="EMBL" id="AB000823">
    <property type="protein sequence ID" value="BAA22070.1"/>
    <property type="molecule type" value="mRNA"/>
</dbReference>
<dbReference type="RefSeq" id="NP_001272121.1">
    <property type="nucleotide sequence ID" value="NM_001285192.1"/>
</dbReference>
<dbReference type="SMR" id="P56435"/>
<dbReference type="STRING" id="9541.ENSMFAP00000039346"/>
<dbReference type="MEROPS" id="S01.140"/>
<dbReference type="GlyCosmos" id="P56435">
    <property type="glycosylation" value="2 sites, No reported glycans"/>
</dbReference>
<dbReference type="eggNOG" id="KOG3627">
    <property type="taxonomic scope" value="Eukaryota"/>
</dbReference>
<dbReference type="Proteomes" id="UP000233100">
    <property type="component" value="Unplaced"/>
</dbReference>
<dbReference type="GO" id="GO:0005737">
    <property type="term" value="C:cytoplasm"/>
    <property type="evidence" value="ECO:0007669"/>
    <property type="project" value="TreeGrafter"/>
</dbReference>
<dbReference type="GO" id="GO:0005615">
    <property type="term" value="C:extracellular space"/>
    <property type="evidence" value="ECO:0007669"/>
    <property type="project" value="TreeGrafter"/>
</dbReference>
<dbReference type="GO" id="GO:0043231">
    <property type="term" value="C:intracellular membrane-bounded organelle"/>
    <property type="evidence" value="ECO:0007669"/>
    <property type="project" value="TreeGrafter"/>
</dbReference>
<dbReference type="GO" id="GO:0004252">
    <property type="term" value="F:serine-type endopeptidase activity"/>
    <property type="evidence" value="ECO:0007669"/>
    <property type="project" value="UniProtKB-EC"/>
</dbReference>
<dbReference type="GO" id="GO:0006508">
    <property type="term" value="P:proteolysis"/>
    <property type="evidence" value="ECO:0007669"/>
    <property type="project" value="UniProtKB-KW"/>
</dbReference>
<dbReference type="CDD" id="cd00190">
    <property type="entry name" value="Tryp_SPc"/>
    <property type="match status" value="1"/>
</dbReference>
<dbReference type="FunFam" id="2.40.10.10:FF:000014">
    <property type="entry name" value="Complement factor D"/>
    <property type="match status" value="1"/>
</dbReference>
<dbReference type="FunFam" id="2.40.10.10:FF:000005">
    <property type="entry name" value="Serine protease 37"/>
    <property type="match status" value="1"/>
</dbReference>
<dbReference type="Gene3D" id="2.40.10.10">
    <property type="entry name" value="Trypsin-like serine proteases"/>
    <property type="match status" value="2"/>
</dbReference>
<dbReference type="InterPro" id="IPR009003">
    <property type="entry name" value="Peptidase_S1_PA"/>
</dbReference>
<dbReference type="InterPro" id="IPR043504">
    <property type="entry name" value="Peptidase_S1_PA_chymotrypsin"/>
</dbReference>
<dbReference type="InterPro" id="IPR001314">
    <property type="entry name" value="Peptidase_S1A"/>
</dbReference>
<dbReference type="InterPro" id="IPR001254">
    <property type="entry name" value="Trypsin_dom"/>
</dbReference>
<dbReference type="InterPro" id="IPR033116">
    <property type="entry name" value="TRYPSIN_SER"/>
</dbReference>
<dbReference type="PANTHER" id="PTHR24271:SF24">
    <property type="entry name" value="CHYMASE"/>
    <property type="match status" value="1"/>
</dbReference>
<dbReference type="PANTHER" id="PTHR24271">
    <property type="entry name" value="KALLIKREIN-RELATED"/>
    <property type="match status" value="1"/>
</dbReference>
<dbReference type="Pfam" id="PF00089">
    <property type="entry name" value="Trypsin"/>
    <property type="match status" value="1"/>
</dbReference>
<dbReference type="PRINTS" id="PR00722">
    <property type="entry name" value="CHYMOTRYPSIN"/>
</dbReference>
<dbReference type="SMART" id="SM00020">
    <property type="entry name" value="Tryp_SPc"/>
    <property type="match status" value="1"/>
</dbReference>
<dbReference type="SUPFAM" id="SSF50494">
    <property type="entry name" value="Trypsin-like serine proteases"/>
    <property type="match status" value="1"/>
</dbReference>
<dbReference type="PROSITE" id="PS50240">
    <property type="entry name" value="TRYPSIN_DOM"/>
    <property type="match status" value="1"/>
</dbReference>
<dbReference type="PROSITE" id="PS00135">
    <property type="entry name" value="TRYPSIN_SER"/>
    <property type="match status" value="1"/>
</dbReference>
<gene>
    <name type="primary">CMA1</name>
</gene>
<accession>P56435</accession>